<dbReference type="EMBL" id="AM933172">
    <property type="protein sequence ID" value="CAR32557.1"/>
    <property type="molecule type" value="Genomic_DNA"/>
</dbReference>
<dbReference type="RefSeq" id="WP_001284251.1">
    <property type="nucleotide sequence ID" value="NC_011294.1"/>
</dbReference>
<dbReference type="SMR" id="B5R048"/>
<dbReference type="KEGG" id="set:SEN0975"/>
<dbReference type="HOGENOM" id="CLU_144710_3_1_6"/>
<dbReference type="Proteomes" id="UP000000613">
    <property type="component" value="Chromosome"/>
</dbReference>
<dbReference type="Gene3D" id="1.10.1660.10">
    <property type="match status" value="1"/>
</dbReference>
<dbReference type="HAMAP" id="MF_01155">
    <property type="entry name" value="CbpM"/>
    <property type="match status" value="1"/>
</dbReference>
<dbReference type="InterPro" id="IPR022835">
    <property type="entry name" value="CbpM"/>
</dbReference>
<dbReference type="NCBIfam" id="NF007617">
    <property type="entry name" value="PRK10265.1"/>
    <property type="match status" value="1"/>
</dbReference>
<dbReference type="Pfam" id="PF13591">
    <property type="entry name" value="MerR_2"/>
    <property type="match status" value="1"/>
</dbReference>
<comment type="function">
    <text evidence="1">Interacts with CbpA and inhibits both the DnaJ-like co-chaperone activity and the DNA binding activity of CbpA. Together with CbpA, modulates the activity of the DnaK chaperone system. Does not inhibit the co-chaperone activity of DnaJ.</text>
</comment>
<comment type="similarity">
    <text evidence="1">Belongs to the CbpM family.</text>
</comment>
<protein>
    <recommendedName>
        <fullName evidence="1">Chaperone modulatory protein CbpM</fullName>
    </recommendedName>
</protein>
<gene>
    <name evidence="1" type="primary">cbpM</name>
    <name type="ordered locus">SEN0975</name>
</gene>
<evidence type="ECO:0000255" key="1">
    <source>
        <dbReference type="HAMAP-Rule" id="MF_01155"/>
    </source>
</evidence>
<proteinExistence type="inferred from homology"/>
<organism>
    <name type="scientific">Salmonella enteritidis PT4 (strain P125109)</name>
    <dbReference type="NCBI Taxonomy" id="550537"/>
    <lineage>
        <taxon>Bacteria</taxon>
        <taxon>Pseudomonadati</taxon>
        <taxon>Pseudomonadota</taxon>
        <taxon>Gammaproteobacteria</taxon>
        <taxon>Enterobacterales</taxon>
        <taxon>Enterobacteriaceae</taxon>
        <taxon>Salmonella</taxon>
    </lineage>
</organism>
<accession>B5R048</accession>
<name>CBPM_SALEP</name>
<sequence length="101" mass="11595">MANITVTFTITEFCLHTGVTEEELNEIVGLGVIEPYEDDNADWQFDDRAASVVQRALRLREELALDWPGIAVALTLLEENSRLREENRLLLQRLSRFISHP</sequence>
<feature type="chain" id="PRO_1000137777" description="Chaperone modulatory protein CbpM">
    <location>
        <begin position="1"/>
        <end position="101"/>
    </location>
</feature>
<reference key="1">
    <citation type="journal article" date="2008" name="Genome Res.">
        <title>Comparative genome analysis of Salmonella enteritidis PT4 and Salmonella gallinarum 287/91 provides insights into evolutionary and host adaptation pathways.</title>
        <authorList>
            <person name="Thomson N.R."/>
            <person name="Clayton D.J."/>
            <person name="Windhorst D."/>
            <person name="Vernikos G."/>
            <person name="Davidson S."/>
            <person name="Churcher C."/>
            <person name="Quail M.A."/>
            <person name="Stevens M."/>
            <person name="Jones M.A."/>
            <person name="Watson M."/>
            <person name="Barron A."/>
            <person name="Layton A."/>
            <person name="Pickard D."/>
            <person name="Kingsley R.A."/>
            <person name="Bignell A."/>
            <person name="Clark L."/>
            <person name="Harris B."/>
            <person name="Ormond D."/>
            <person name="Abdellah Z."/>
            <person name="Brooks K."/>
            <person name="Cherevach I."/>
            <person name="Chillingworth T."/>
            <person name="Woodward J."/>
            <person name="Norberczak H."/>
            <person name="Lord A."/>
            <person name="Arrowsmith C."/>
            <person name="Jagels K."/>
            <person name="Moule S."/>
            <person name="Mungall K."/>
            <person name="Saunders M."/>
            <person name="Whitehead S."/>
            <person name="Chabalgoity J.A."/>
            <person name="Maskell D."/>
            <person name="Humphreys T."/>
            <person name="Roberts M."/>
            <person name="Barrow P.A."/>
            <person name="Dougan G."/>
            <person name="Parkhill J."/>
        </authorList>
    </citation>
    <scope>NUCLEOTIDE SEQUENCE [LARGE SCALE GENOMIC DNA]</scope>
    <source>
        <strain>P125109</strain>
    </source>
</reference>